<sequence>MIIHSLLDTDLYKFTMMQAVLHQHPAAQVDYRFKCRTPGVDLAQFIDEISREIDALCRLRLREDEVDYLRSLRFIKPDFADFLALFHLDRKYLTLAASAAHPGEIELTIRGPWLHTILFEVPLLAIINEVWFRNTSEPDFEEGRSRLREKVRSLRSMPAGCKIADYGTRRRYSRQWHGELLPLLRDGLGEQFVGTSNVFFAKQYGLTPLGTMAHEYLQAFQALGPRLRDSQVAALDSWAREYRGDLGIALSDVVGLDAFLRDFDLYFCKLFDGMRHDSGDPFEWGERVIAHLEAHRVDPRTKVLVFSDGLNIDKVMRLYEHFSPRCRLAFGVGTSLTNDLGPTPLQIVIKMVRCNGQPVAKLSDSPGKSMCEDLGYLRYLRDVFGLPPMPEAGDPARQ</sequence>
<accession>B0RVE9</accession>
<protein>
    <recommendedName>
        <fullName evidence="1">Nicotinate phosphoribosyltransferase</fullName>
        <shortName evidence="1">NAPRTase</shortName>
        <ecNumber evidence="1">6.3.4.21</ecNumber>
    </recommendedName>
</protein>
<comment type="function">
    <text evidence="1">Catalyzes the synthesis of beta-nicotinate D-ribonucleotide from nicotinate and 5-phospho-D-ribose 1-phosphate at the expense of ATP.</text>
</comment>
<comment type="catalytic activity">
    <reaction evidence="1">
        <text>nicotinate + 5-phospho-alpha-D-ribose 1-diphosphate + ATP + H2O = nicotinate beta-D-ribonucleotide + ADP + phosphate + diphosphate</text>
        <dbReference type="Rhea" id="RHEA:36163"/>
        <dbReference type="ChEBI" id="CHEBI:15377"/>
        <dbReference type="ChEBI" id="CHEBI:30616"/>
        <dbReference type="ChEBI" id="CHEBI:32544"/>
        <dbReference type="ChEBI" id="CHEBI:33019"/>
        <dbReference type="ChEBI" id="CHEBI:43474"/>
        <dbReference type="ChEBI" id="CHEBI:57502"/>
        <dbReference type="ChEBI" id="CHEBI:58017"/>
        <dbReference type="ChEBI" id="CHEBI:456216"/>
        <dbReference type="EC" id="6.3.4.21"/>
    </reaction>
</comment>
<comment type="pathway">
    <text evidence="1">Cofactor biosynthesis; NAD(+) biosynthesis; nicotinate D-ribonucleotide from nicotinate: step 1/1.</text>
</comment>
<comment type="PTM">
    <text evidence="1">Transiently phosphorylated on a His residue during the reaction cycle. Phosphorylation strongly increases the affinity for substrates and increases the rate of nicotinate D-ribonucleotide production. Dephosphorylation regenerates the low-affinity form of the enzyme, leading to product release.</text>
</comment>
<comment type="similarity">
    <text evidence="1">Belongs to the NAPRTase family.</text>
</comment>
<evidence type="ECO:0000255" key="1">
    <source>
        <dbReference type="HAMAP-Rule" id="MF_00570"/>
    </source>
</evidence>
<proteinExistence type="inferred from homology"/>
<name>PNCB_XANCB</name>
<feature type="chain" id="PRO_1000129492" description="Nicotinate phosphoribosyltransferase">
    <location>
        <begin position="1"/>
        <end position="398"/>
    </location>
</feature>
<feature type="modified residue" description="Phosphohistidine; by autocatalysis" evidence="1">
    <location>
        <position position="214"/>
    </location>
</feature>
<organism>
    <name type="scientific">Xanthomonas campestris pv. campestris (strain B100)</name>
    <dbReference type="NCBI Taxonomy" id="509169"/>
    <lineage>
        <taxon>Bacteria</taxon>
        <taxon>Pseudomonadati</taxon>
        <taxon>Pseudomonadota</taxon>
        <taxon>Gammaproteobacteria</taxon>
        <taxon>Lysobacterales</taxon>
        <taxon>Lysobacteraceae</taxon>
        <taxon>Xanthomonas</taxon>
    </lineage>
</organism>
<keyword id="KW-0436">Ligase</keyword>
<keyword id="KW-0597">Phosphoprotein</keyword>
<keyword id="KW-0662">Pyridine nucleotide biosynthesis</keyword>
<reference key="1">
    <citation type="journal article" date="2008" name="J. Biotechnol.">
        <title>The genome of Xanthomonas campestris pv. campestris B100 and its use for the reconstruction of metabolic pathways involved in xanthan biosynthesis.</title>
        <authorList>
            <person name="Vorhoelter F.-J."/>
            <person name="Schneiker S."/>
            <person name="Goesmann A."/>
            <person name="Krause L."/>
            <person name="Bekel T."/>
            <person name="Kaiser O."/>
            <person name="Linke B."/>
            <person name="Patschkowski T."/>
            <person name="Rueckert C."/>
            <person name="Schmid J."/>
            <person name="Sidhu V.K."/>
            <person name="Sieber V."/>
            <person name="Tauch A."/>
            <person name="Watt S.A."/>
            <person name="Weisshaar B."/>
            <person name="Becker A."/>
            <person name="Niehaus K."/>
            <person name="Puehler A."/>
        </authorList>
    </citation>
    <scope>NUCLEOTIDE SEQUENCE [LARGE SCALE GENOMIC DNA]</scope>
    <source>
        <strain>B100</strain>
    </source>
</reference>
<dbReference type="EC" id="6.3.4.21" evidence="1"/>
<dbReference type="EMBL" id="AM920689">
    <property type="protein sequence ID" value="CAP53040.1"/>
    <property type="molecule type" value="Genomic_DNA"/>
</dbReference>
<dbReference type="SMR" id="B0RVE9"/>
<dbReference type="KEGG" id="xca:xcc-b100_3674"/>
<dbReference type="HOGENOM" id="CLU_030991_1_0_6"/>
<dbReference type="UniPathway" id="UPA00253">
    <property type="reaction ID" value="UER00457"/>
</dbReference>
<dbReference type="Proteomes" id="UP000001188">
    <property type="component" value="Chromosome"/>
</dbReference>
<dbReference type="GO" id="GO:0005829">
    <property type="term" value="C:cytosol"/>
    <property type="evidence" value="ECO:0007669"/>
    <property type="project" value="TreeGrafter"/>
</dbReference>
<dbReference type="GO" id="GO:0004516">
    <property type="term" value="F:nicotinate phosphoribosyltransferase activity"/>
    <property type="evidence" value="ECO:0007669"/>
    <property type="project" value="UniProtKB-UniRule"/>
</dbReference>
<dbReference type="GO" id="GO:0034355">
    <property type="term" value="P:NAD biosynthetic process via the salvage pathway"/>
    <property type="evidence" value="ECO:0007669"/>
    <property type="project" value="TreeGrafter"/>
</dbReference>
<dbReference type="CDD" id="cd01401">
    <property type="entry name" value="PncB_like"/>
    <property type="match status" value="1"/>
</dbReference>
<dbReference type="FunFam" id="3.20.140.10:FF:000008">
    <property type="entry name" value="Nicotinate phosphoribosyltransferase"/>
    <property type="match status" value="1"/>
</dbReference>
<dbReference type="Gene3D" id="3.20.140.10">
    <property type="entry name" value="nicotinate phosphoribosyltransferase"/>
    <property type="match status" value="1"/>
</dbReference>
<dbReference type="HAMAP" id="MF_00570">
    <property type="entry name" value="NAPRTase"/>
    <property type="match status" value="1"/>
</dbReference>
<dbReference type="InterPro" id="IPR041525">
    <property type="entry name" value="N/Namide_PRibTrfase"/>
</dbReference>
<dbReference type="InterPro" id="IPR040727">
    <property type="entry name" value="NAPRTase_N"/>
</dbReference>
<dbReference type="InterPro" id="IPR006406">
    <property type="entry name" value="Nic_PRibTrfase"/>
</dbReference>
<dbReference type="InterPro" id="IPR007229">
    <property type="entry name" value="Nic_PRibTrfase-Fam"/>
</dbReference>
<dbReference type="InterPro" id="IPR036068">
    <property type="entry name" value="Nicotinate_pribotase-like_C"/>
</dbReference>
<dbReference type="NCBIfam" id="TIGR01514">
    <property type="entry name" value="NAPRTase"/>
    <property type="match status" value="1"/>
</dbReference>
<dbReference type="NCBIfam" id="NF003704">
    <property type="entry name" value="PRK05321.1"/>
    <property type="match status" value="1"/>
</dbReference>
<dbReference type="PANTHER" id="PTHR11098">
    <property type="entry name" value="NICOTINATE PHOSPHORIBOSYLTRANSFERASE"/>
    <property type="match status" value="1"/>
</dbReference>
<dbReference type="PANTHER" id="PTHR11098:SF1">
    <property type="entry name" value="NICOTINATE PHOSPHORIBOSYLTRANSFERASE"/>
    <property type="match status" value="1"/>
</dbReference>
<dbReference type="Pfam" id="PF04095">
    <property type="entry name" value="NAPRTase"/>
    <property type="match status" value="1"/>
</dbReference>
<dbReference type="Pfam" id="PF17767">
    <property type="entry name" value="NAPRTase_N"/>
    <property type="match status" value="1"/>
</dbReference>
<dbReference type="PIRSF" id="PIRSF000484">
    <property type="entry name" value="NAPRT"/>
    <property type="match status" value="1"/>
</dbReference>
<dbReference type="SUPFAM" id="SSF51690">
    <property type="entry name" value="Nicotinate/Quinolinate PRTase C-terminal domain-like"/>
    <property type="match status" value="1"/>
</dbReference>
<dbReference type="SUPFAM" id="SSF54675">
    <property type="entry name" value="Nicotinate/Quinolinate PRTase N-terminal domain-like"/>
    <property type="match status" value="1"/>
</dbReference>
<gene>
    <name evidence="1" type="primary">pncB</name>
    <name type="ordered locus">xcc-b100_3674</name>
</gene>